<organism>
    <name type="scientific">Pasteurella multocida (strain Pm70)</name>
    <dbReference type="NCBI Taxonomy" id="272843"/>
    <lineage>
        <taxon>Bacteria</taxon>
        <taxon>Pseudomonadati</taxon>
        <taxon>Pseudomonadota</taxon>
        <taxon>Gammaproteobacteria</taxon>
        <taxon>Pasteurellales</taxon>
        <taxon>Pasteurellaceae</taxon>
        <taxon>Pasteurella</taxon>
    </lineage>
</organism>
<feature type="chain" id="PRO_0000162893" description="4-hydroxybenzoate octaprenyltransferase">
    <location>
        <begin position="1"/>
        <end position="290"/>
    </location>
</feature>
<feature type="transmembrane region" description="Helical" evidence="1">
    <location>
        <begin position="21"/>
        <end position="41"/>
    </location>
</feature>
<feature type="transmembrane region" description="Helical" evidence="1">
    <location>
        <begin position="44"/>
        <end position="64"/>
    </location>
</feature>
<feature type="transmembrane region" description="Helical" evidence="1">
    <location>
        <begin position="84"/>
        <end position="104"/>
    </location>
</feature>
<feature type="transmembrane region" description="Helical" evidence="1">
    <location>
        <begin position="106"/>
        <end position="126"/>
    </location>
</feature>
<feature type="transmembrane region" description="Helical" evidence="1">
    <location>
        <begin position="142"/>
        <end position="162"/>
    </location>
</feature>
<feature type="transmembrane region" description="Helical" evidence="1">
    <location>
        <begin position="212"/>
        <end position="232"/>
    </location>
</feature>
<feature type="transmembrane region" description="Helical" evidence="1">
    <location>
        <begin position="235"/>
        <end position="255"/>
    </location>
</feature>
<feature type="transmembrane region" description="Helical" evidence="1">
    <location>
        <begin position="267"/>
        <end position="287"/>
    </location>
</feature>
<proteinExistence type="inferred from homology"/>
<keyword id="KW-0997">Cell inner membrane</keyword>
<keyword id="KW-1003">Cell membrane</keyword>
<keyword id="KW-0460">Magnesium</keyword>
<keyword id="KW-0472">Membrane</keyword>
<keyword id="KW-1185">Reference proteome</keyword>
<keyword id="KW-0808">Transferase</keyword>
<keyword id="KW-0812">Transmembrane</keyword>
<keyword id="KW-1133">Transmembrane helix</keyword>
<keyword id="KW-0831">Ubiquinone biosynthesis</keyword>
<dbReference type="EC" id="2.5.1.39" evidence="1"/>
<dbReference type="EMBL" id="AE004439">
    <property type="protein sequence ID" value="AAK03835.1"/>
    <property type="molecule type" value="Genomic_DNA"/>
</dbReference>
<dbReference type="RefSeq" id="WP_005718855.1">
    <property type="nucleotide sequence ID" value="NC_002663.1"/>
</dbReference>
<dbReference type="SMR" id="P57970"/>
<dbReference type="STRING" id="272843.PM1751"/>
<dbReference type="EnsemblBacteria" id="AAK03835">
    <property type="protein sequence ID" value="AAK03835"/>
    <property type="gene ID" value="PM1751"/>
</dbReference>
<dbReference type="KEGG" id="pmu:PM1751"/>
<dbReference type="PATRIC" id="fig|272843.6.peg.1773"/>
<dbReference type="HOGENOM" id="CLU_034879_1_0_6"/>
<dbReference type="OrthoDB" id="9782418at2"/>
<dbReference type="UniPathway" id="UPA00232"/>
<dbReference type="Proteomes" id="UP000000809">
    <property type="component" value="Chromosome"/>
</dbReference>
<dbReference type="GO" id="GO:0005886">
    <property type="term" value="C:plasma membrane"/>
    <property type="evidence" value="ECO:0007669"/>
    <property type="project" value="UniProtKB-SubCell"/>
</dbReference>
<dbReference type="GO" id="GO:0008412">
    <property type="term" value="F:4-hydroxybenzoate polyprenyltransferase activity"/>
    <property type="evidence" value="ECO:0007669"/>
    <property type="project" value="UniProtKB-UniRule"/>
</dbReference>
<dbReference type="GO" id="GO:0006744">
    <property type="term" value="P:ubiquinone biosynthetic process"/>
    <property type="evidence" value="ECO:0007669"/>
    <property type="project" value="UniProtKB-UniRule"/>
</dbReference>
<dbReference type="CDD" id="cd13959">
    <property type="entry name" value="PT_UbiA_COQ2"/>
    <property type="match status" value="1"/>
</dbReference>
<dbReference type="FunFam" id="1.10.357.140:FF:000002">
    <property type="entry name" value="4-hydroxybenzoate octaprenyltransferase"/>
    <property type="match status" value="1"/>
</dbReference>
<dbReference type="FunFam" id="1.20.120.1780:FF:000001">
    <property type="entry name" value="4-hydroxybenzoate octaprenyltransferase"/>
    <property type="match status" value="1"/>
</dbReference>
<dbReference type="Gene3D" id="1.10.357.140">
    <property type="entry name" value="UbiA prenyltransferase"/>
    <property type="match status" value="1"/>
</dbReference>
<dbReference type="Gene3D" id="1.20.120.1780">
    <property type="entry name" value="UbiA prenyltransferase"/>
    <property type="match status" value="1"/>
</dbReference>
<dbReference type="HAMAP" id="MF_01635">
    <property type="entry name" value="UbiA"/>
    <property type="match status" value="1"/>
</dbReference>
<dbReference type="InterPro" id="IPR006370">
    <property type="entry name" value="HB_polyprenyltransferase-like"/>
</dbReference>
<dbReference type="InterPro" id="IPR039653">
    <property type="entry name" value="Prenyltransferase"/>
</dbReference>
<dbReference type="InterPro" id="IPR000537">
    <property type="entry name" value="UbiA_prenyltransferase"/>
</dbReference>
<dbReference type="InterPro" id="IPR030470">
    <property type="entry name" value="UbiA_prenylTrfase_CS"/>
</dbReference>
<dbReference type="InterPro" id="IPR044878">
    <property type="entry name" value="UbiA_sf"/>
</dbReference>
<dbReference type="NCBIfam" id="TIGR01474">
    <property type="entry name" value="ubiA_proteo"/>
    <property type="match status" value="1"/>
</dbReference>
<dbReference type="PANTHER" id="PTHR11048:SF28">
    <property type="entry name" value="4-HYDROXYBENZOATE POLYPRENYLTRANSFERASE, MITOCHONDRIAL"/>
    <property type="match status" value="1"/>
</dbReference>
<dbReference type="PANTHER" id="PTHR11048">
    <property type="entry name" value="PRENYLTRANSFERASES"/>
    <property type="match status" value="1"/>
</dbReference>
<dbReference type="Pfam" id="PF01040">
    <property type="entry name" value="UbiA"/>
    <property type="match status" value="1"/>
</dbReference>
<dbReference type="PROSITE" id="PS00943">
    <property type="entry name" value="UBIA"/>
    <property type="match status" value="1"/>
</dbReference>
<evidence type="ECO:0000255" key="1">
    <source>
        <dbReference type="HAMAP-Rule" id="MF_01635"/>
    </source>
</evidence>
<name>UBIA_PASMU</name>
<protein>
    <recommendedName>
        <fullName evidence="1">4-hydroxybenzoate octaprenyltransferase</fullName>
        <ecNumber evidence="1">2.5.1.39</ecNumber>
    </recommendedName>
    <alternativeName>
        <fullName evidence="1">4-HB polyprenyltransferase</fullName>
    </alternativeName>
</protein>
<comment type="function">
    <text evidence="1">Catalyzes the prenylation of para-hydroxybenzoate (PHB) with an all-trans polyprenyl group. Mediates the second step in the final reaction sequence of ubiquinone-8 (UQ-8) biosynthesis, which is the condensation of the polyisoprenoid side chain with PHB, generating the first membrane-bound Q intermediate 3-octaprenyl-4-hydroxybenzoate.</text>
</comment>
<comment type="catalytic activity">
    <reaction evidence="1">
        <text>all-trans-octaprenyl diphosphate + 4-hydroxybenzoate = 4-hydroxy-3-(all-trans-octaprenyl)benzoate + diphosphate</text>
        <dbReference type="Rhea" id="RHEA:27782"/>
        <dbReference type="ChEBI" id="CHEBI:1617"/>
        <dbReference type="ChEBI" id="CHEBI:17879"/>
        <dbReference type="ChEBI" id="CHEBI:33019"/>
        <dbReference type="ChEBI" id="CHEBI:57711"/>
        <dbReference type="EC" id="2.5.1.39"/>
    </reaction>
</comment>
<comment type="cofactor">
    <cofactor evidence="1">
        <name>Mg(2+)</name>
        <dbReference type="ChEBI" id="CHEBI:18420"/>
    </cofactor>
</comment>
<comment type="pathway">
    <text evidence="1">Cofactor biosynthesis; ubiquinone biosynthesis.</text>
</comment>
<comment type="subcellular location">
    <subcellularLocation>
        <location evidence="1">Cell inner membrane</location>
        <topology evidence="1">Multi-pass membrane protein</topology>
    </subcellularLocation>
</comment>
<comment type="similarity">
    <text evidence="1">Belongs to the UbiA prenyltransferase family.</text>
</comment>
<reference key="1">
    <citation type="journal article" date="2001" name="Proc. Natl. Acad. Sci. U.S.A.">
        <title>Complete genomic sequence of Pasteurella multocida Pm70.</title>
        <authorList>
            <person name="May B.J."/>
            <person name="Zhang Q."/>
            <person name="Li L.L."/>
            <person name="Paustian M.L."/>
            <person name="Whittam T.S."/>
            <person name="Kapur V."/>
        </authorList>
    </citation>
    <scope>NUCLEOTIDE SEQUENCE [LARGE SCALE GENOMIC DNA]</scope>
    <source>
        <strain>Pm70</strain>
    </source>
</reference>
<accession>P57970</accession>
<sequence>MPISKQKWIAYAQLMRFDKPIGTLLLLWPTLWALFLSVKGMPDLSILSIFVLGVIFMRAAGCVINDYADRHIDGAVKRTSKRPLATGAATPEEAKWLFVLLVFCSFILVLFLNTYAIVLSFIAVFLAFIYPFMKRYTHLPQLFLGMAFGWSIPMAYGASIEALPLECWLLFFANLAWTVAYDTQYAMVDRDDDLRIGVKSTAILFAQYDNKIISLLQIVTLFFLGLIGYLSQLHTSYFVVLFLATLLFVYQCKLIKDRERESCFKAFLNNNYFGAMVFVAFLFGIFFDKL</sequence>
<gene>
    <name evidence="1" type="primary">ubiA</name>
    <name type="ordered locus">PM1751</name>
</gene>